<sequence length="165" mass="17795">MIHCRSMDSPIGPLILAGHGSVLTNLQMVDQTYEPSRVGWLPENGAFAEAVSQLDAYFAGELTEFAIELDLCGTEFQQRVWQALLTIPYGETRSYGEIAEQVGAPGAARAVGLANSRNPIAIIVPCHRVIGASGQLIGYGGGLNRKLTLLELEKHQVLTSLTLFD</sequence>
<organism>
    <name type="scientific">Mycobacterium leprae (strain TN)</name>
    <dbReference type="NCBI Taxonomy" id="272631"/>
    <lineage>
        <taxon>Bacteria</taxon>
        <taxon>Bacillati</taxon>
        <taxon>Actinomycetota</taxon>
        <taxon>Actinomycetes</taxon>
        <taxon>Mycobacteriales</taxon>
        <taxon>Mycobacteriaceae</taxon>
        <taxon>Mycobacterium</taxon>
    </lineage>
</organism>
<proteinExistence type="inferred from homology"/>
<reference key="1">
    <citation type="submission" date="1994-03" db="EMBL/GenBank/DDBJ databases">
        <authorList>
            <person name="Smith D.R."/>
            <person name="Robison K."/>
        </authorList>
    </citation>
    <scope>NUCLEOTIDE SEQUENCE [GENOMIC DNA]</scope>
</reference>
<reference key="2">
    <citation type="journal article" date="2001" name="Nature">
        <title>Massive gene decay in the leprosy bacillus.</title>
        <authorList>
            <person name="Cole S.T."/>
            <person name="Eiglmeier K."/>
            <person name="Parkhill J."/>
            <person name="James K.D."/>
            <person name="Thomson N.R."/>
            <person name="Wheeler P.R."/>
            <person name="Honore N."/>
            <person name="Garnier T."/>
            <person name="Churcher C.M."/>
            <person name="Harris D.E."/>
            <person name="Mungall K.L."/>
            <person name="Basham D."/>
            <person name="Brown D."/>
            <person name="Chillingworth T."/>
            <person name="Connor R."/>
            <person name="Davies R.M."/>
            <person name="Devlin K."/>
            <person name="Duthoy S."/>
            <person name="Feltwell T."/>
            <person name="Fraser A."/>
            <person name="Hamlin N."/>
            <person name="Holroyd S."/>
            <person name="Hornsby T."/>
            <person name="Jagels K."/>
            <person name="Lacroix C."/>
            <person name="Maclean J."/>
            <person name="Moule S."/>
            <person name="Murphy L.D."/>
            <person name="Oliver K."/>
            <person name="Quail M.A."/>
            <person name="Rajandream M.A."/>
            <person name="Rutherford K.M."/>
            <person name="Rutter S."/>
            <person name="Seeger K."/>
            <person name="Simon S."/>
            <person name="Simmonds M."/>
            <person name="Skelton J."/>
            <person name="Squares R."/>
            <person name="Squares S."/>
            <person name="Stevens K."/>
            <person name="Taylor K."/>
            <person name="Whitehead S."/>
            <person name="Woodward J.R."/>
            <person name="Barrell B.G."/>
        </authorList>
    </citation>
    <scope>NUCLEOTIDE SEQUENCE [LARGE SCALE GENOMIC DNA]</scope>
    <source>
        <strain>TN</strain>
    </source>
</reference>
<protein>
    <recommendedName>
        <fullName evidence="1">Methylated-DNA--protein-cysteine methyltransferase</fullName>
        <ecNumber evidence="1">2.1.1.63</ecNumber>
    </recommendedName>
    <alternativeName>
        <fullName evidence="1">6-O-methylguanine-DNA methyltransferase</fullName>
        <shortName evidence="1">MGMT</shortName>
    </alternativeName>
    <alternativeName>
        <fullName evidence="1">O-6-methylguanine-DNA-alkyltransferase</fullName>
    </alternativeName>
</protein>
<keyword id="KW-0963">Cytoplasm</keyword>
<keyword id="KW-0227">DNA damage</keyword>
<keyword id="KW-0234">DNA repair</keyword>
<keyword id="KW-0489">Methyltransferase</keyword>
<keyword id="KW-1185">Reference proteome</keyword>
<keyword id="KW-0808">Transferase</keyword>
<evidence type="ECO:0000255" key="1">
    <source>
        <dbReference type="HAMAP-Rule" id="MF_00772"/>
    </source>
</evidence>
<gene>
    <name evidence="1" type="primary">ogt</name>
    <name type="ordered locus">ML1151</name>
</gene>
<feature type="chain" id="PRO_0000139367" description="Methylated-DNA--protein-cysteine methyltransferase">
    <location>
        <begin position="1"/>
        <end position="165"/>
    </location>
</feature>
<feature type="active site" description="Nucleophile; methyl group acceptor" evidence="1">
    <location>
        <position position="126"/>
    </location>
</feature>
<comment type="function">
    <text evidence="1">Involved in the cellular defense against the biological effects of O6-methylguanine (O6-MeG) and O4-methylthymine (O4-MeT) in DNA. Repairs the methylated nucleobase in DNA by stoichiometrically transferring the methyl group to a cysteine residue in the enzyme. This is a suicide reaction: the enzyme is irreversibly inactivated.</text>
</comment>
<comment type="catalytic activity">
    <reaction evidence="1">
        <text>a 6-O-methyl-2'-deoxyguanosine in DNA + L-cysteinyl-[protein] = S-methyl-L-cysteinyl-[protein] + a 2'-deoxyguanosine in DNA</text>
        <dbReference type="Rhea" id="RHEA:24000"/>
        <dbReference type="Rhea" id="RHEA-COMP:10131"/>
        <dbReference type="Rhea" id="RHEA-COMP:10132"/>
        <dbReference type="Rhea" id="RHEA-COMP:11367"/>
        <dbReference type="Rhea" id="RHEA-COMP:11368"/>
        <dbReference type="ChEBI" id="CHEBI:29950"/>
        <dbReference type="ChEBI" id="CHEBI:82612"/>
        <dbReference type="ChEBI" id="CHEBI:85445"/>
        <dbReference type="ChEBI" id="CHEBI:85448"/>
        <dbReference type="EC" id="2.1.1.63"/>
    </reaction>
</comment>
<comment type="catalytic activity">
    <reaction evidence="1">
        <text>a 4-O-methyl-thymidine in DNA + L-cysteinyl-[protein] = a thymidine in DNA + S-methyl-L-cysteinyl-[protein]</text>
        <dbReference type="Rhea" id="RHEA:53428"/>
        <dbReference type="Rhea" id="RHEA-COMP:10131"/>
        <dbReference type="Rhea" id="RHEA-COMP:10132"/>
        <dbReference type="Rhea" id="RHEA-COMP:13555"/>
        <dbReference type="Rhea" id="RHEA-COMP:13556"/>
        <dbReference type="ChEBI" id="CHEBI:29950"/>
        <dbReference type="ChEBI" id="CHEBI:82612"/>
        <dbReference type="ChEBI" id="CHEBI:137386"/>
        <dbReference type="ChEBI" id="CHEBI:137387"/>
        <dbReference type="EC" id="2.1.1.63"/>
    </reaction>
</comment>
<comment type="subcellular location">
    <subcellularLocation>
        <location evidence="1">Cytoplasm</location>
    </subcellularLocation>
</comment>
<comment type="miscellaneous">
    <text>This enzyme catalyzes only one turnover and therefore is not strictly catalytic. According to one definition, an enzyme is a biocatalyst that acts repeatedly and over many reaction cycles.</text>
</comment>
<comment type="similarity">
    <text evidence="1">Belongs to the MGMT family.</text>
</comment>
<accession>P52982</accession>
<dbReference type="EC" id="2.1.1.63" evidence="1"/>
<dbReference type="EMBL" id="U00014">
    <property type="protein sequence ID" value="AAA50905.1"/>
    <property type="molecule type" value="Genomic_DNA"/>
</dbReference>
<dbReference type="EMBL" id="AL583920">
    <property type="protein sequence ID" value="CAC31532.1"/>
    <property type="molecule type" value="Genomic_DNA"/>
</dbReference>
<dbReference type="PIR" id="S72810">
    <property type="entry name" value="S72810"/>
</dbReference>
<dbReference type="RefSeq" id="NP_301845.1">
    <property type="nucleotide sequence ID" value="NC_002677.1"/>
</dbReference>
<dbReference type="RefSeq" id="WP_010908169.1">
    <property type="nucleotide sequence ID" value="NC_002677.1"/>
</dbReference>
<dbReference type="SMR" id="P52982"/>
<dbReference type="STRING" id="272631.gene:17574981"/>
<dbReference type="KEGG" id="mle:ML1151"/>
<dbReference type="PATRIC" id="fig|272631.5.peg.2074"/>
<dbReference type="Leproma" id="ML1151"/>
<dbReference type="eggNOG" id="COG0350">
    <property type="taxonomic scope" value="Bacteria"/>
</dbReference>
<dbReference type="HOGENOM" id="CLU_000445_52_2_11"/>
<dbReference type="OrthoDB" id="9802228at2"/>
<dbReference type="Proteomes" id="UP000000806">
    <property type="component" value="Chromosome"/>
</dbReference>
<dbReference type="GO" id="GO:0005737">
    <property type="term" value="C:cytoplasm"/>
    <property type="evidence" value="ECO:0007669"/>
    <property type="project" value="UniProtKB-SubCell"/>
</dbReference>
<dbReference type="GO" id="GO:0003908">
    <property type="term" value="F:methylated-DNA-[protein]-cysteine S-methyltransferase activity"/>
    <property type="evidence" value="ECO:0007669"/>
    <property type="project" value="UniProtKB-UniRule"/>
</dbReference>
<dbReference type="GO" id="GO:0006307">
    <property type="term" value="P:DNA alkylation repair"/>
    <property type="evidence" value="ECO:0007669"/>
    <property type="project" value="UniProtKB-UniRule"/>
</dbReference>
<dbReference type="GO" id="GO:0032259">
    <property type="term" value="P:methylation"/>
    <property type="evidence" value="ECO:0007669"/>
    <property type="project" value="UniProtKB-KW"/>
</dbReference>
<dbReference type="CDD" id="cd06445">
    <property type="entry name" value="ATase"/>
    <property type="match status" value="1"/>
</dbReference>
<dbReference type="FunFam" id="1.10.10.10:FF:000214">
    <property type="entry name" value="Methylated-DNA--protein-cysteine methyltransferase"/>
    <property type="match status" value="1"/>
</dbReference>
<dbReference type="Gene3D" id="3.30.160.70">
    <property type="entry name" value="Methylated DNA-protein cysteine methyltransferase domain"/>
    <property type="match status" value="1"/>
</dbReference>
<dbReference type="Gene3D" id="1.10.10.10">
    <property type="entry name" value="Winged helix-like DNA-binding domain superfamily/Winged helix DNA-binding domain"/>
    <property type="match status" value="1"/>
</dbReference>
<dbReference type="HAMAP" id="MF_00772">
    <property type="entry name" value="OGT"/>
    <property type="match status" value="1"/>
</dbReference>
<dbReference type="InterPro" id="IPR001497">
    <property type="entry name" value="MethylDNA_cys_MeTrfase_AS"/>
</dbReference>
<dbReference type="InterPro" id="IPR014048">
    <property type="entry name" value="MethylDNA_cys_MeTrfase_DNA-bd"/>
</dbReference>
<dbReference type="InterPro" id="IPR036217">
    <property type="entry name" value="MethylDNA_cys_MeTrfase_DNAb"/>
</dbReference>
<dbReference type="InterPro" id="IPR008332">
    <property type="entry name" value="MethylG_MeTrfase_N"/>
</dbReference>
<dbReference type="InterPro" id="IPR023546">
    <property type="entry name" value="MGMT"/>
</dbReference>
<dbReference type="InterPro" id="IPR036631">
    <property type="entry name" value="MGMT_N_sf"/>
</dbReference>
<dbReference type="InterPro" id="IPR036388">
    <property type="entry name" value="WH-like_DNA-bd_sf"/>
</dbReference>
<dbReference type="NCBIfam" id="TIGR00589">
    <property type="entry name" value="ogt"/>
    <property type="match status" value="1"/>
</dbReference>
<dbReference type="PANTHER" id="PTHR10815">
    <property type="entry name" value="METHYLATED-DNA--PROTEIN-CYSTEINE METHYLTRANSFERASE"/>
    <property type="match status" value="1"/>
</dbReference>
<dbReference type="PANTHER" id="PTHR10815:SF5">
    <property type="entry name" value="METHYLATED-DNA--PROTEIN-CYSTEINE METHYLTRANSFERASE"/>
    <property type="match status" value="1"/>
</dbReference>
<dbReference type="Pfam" id="PF01035">
    <property type="entry name" value="DNA_binding_1"/>
    <property type="match status" value="1"/>
</dbReference>
<dbReference type="Pfam" id="PF02870">
    <property type="entry name" value="Methyltransf_1N"/>
    <property type="match status" value="1"/>
</dbReference>
<dbReference type="SUPFAM" id="SSF53155">
    <property type="entry name" value="Methylated DNA-protein cysteine methyltransferase domain"/>
    <property type="match status" value="1"/>
</dbReference>
<dbReference type="SUPFAM" id="SSF46767">
    <property type="entry name" value="Methylated DNA-protein cysteine methyltransferase, C-terminal domain"/>
    <property type="match status" value="1"/>
</dbReference>
<dbReference type="PROSITE" id="PS00374">
    <property type="entry name" value="MGMT"/>
    <property type="match status" value="1"/>
</dbReference>
<name>OGT_MYCLE</name>